<reference key="1">
    <citation type="journal article" date="2004" name="Nat. Genet.">
        <title>Complete sequencing and characterization of 21,243 full-length human cDNAs.</title>
        <authorList>
            <person name="Ota T."/>
            <person name="Suzuki Y."/>
            <person name="Nishikawa T."/>
            <person name="Otsuki T."/>
            <person name="Sugiyama T."/>
            <person name="Irie R."/>
            <person name="Wakamatsu A."/>
            <person name="Hayashi K."/>
            <person name="Sato H."/>
            <person name="Nagai K."/>
            <person name="Kimura K."/>
            <person name="Makita H."/>
            <person name="Sekine M."/>
            <person name="Obayashi M."/>
            <person name="Nishi T."/>
            <person name="Shibahara T."/>
            <person name="Tanaka T."/>
            <person name="Ishii S."/>
            <person name="Yamamoto J."/>
            <person name="Saito K."/>
            <person name="Kawai Y."/>
            <person name="Isono Y."/>
            <person name="Nakamura Y."/>
            <person name="Nagahari K."/>
            <person name="Murakami K."/>
            <person name="Yasuda T."/>
            <person name="Iwayanagi T."/>
            <person name="Wagatsuma M."/>
            <person name="Shiratori A."/>
            <person name="Sudo H."/>
            <person name="Hosoiri T."/>
            <person name="Kaku Y."/>
            <person name="Kodaira H."/>
            <person name="Kondo H."/>
            <person name="Sugawara M."/>
            <person name="Takahashi M."/>
            <person name="Kanda K."/>
            <person name="Yokoi T."/>
            <person name="Furuya T."/>
            <person name="Kikkawa E."/>
            <person name="Omura Y."/>
            <person name="Abe K."/>
            <person name="Kamihara K."/>
            <person name="Katsuta N."/>
            <person name="Sato K."/>
            <person name="Tanikawa M."/>
            <person name="Yamazaki M."/>
            <person name="Ninomiya K."/>
            <person name="Ishibashi T."/>
            <person name="Yamashita H."/>
            <person name="Murakawa K."/>
            <person name="Fujimori K."/>
            <person name="Tanai H."/>
            <person name="Kimata M."/>
            <person name="Watanabe M."/>
            <person name="Hiraoka S."/>
            <person name="Chiba Y."/>
            <person name="Ishida S."/>
            <person name="Ono Y."/>
            <person name="Takiguchi S."/>
            <person name="Watanabe S."/>
            <person name="Yosida M."/>
            <person name="Hotuta T."/>
            <person name="Kusano J."/>
            <person name="Kanehori K."/>
            <person name="Takahashi-Fujii A."/>
            <person name="Hara H."/>
            <person name="Tanase T.-O."/>
            <person name="Nomura Y."/>
            <person name="Togiya S."/>
            <person name="Komai F."/>
            <person name="Hara R."/>
            <person name="Takeuchi K."/>
            <person name="Arita M."/>
            <person name="Imose N."/>
            <person name="Musashino K."/>
            <person name="Yuuki H."/>
            <person name="Oshima A."/>
            <person name="Sasaki N."/>
            <person name="Aotsuka S."/>
            <person name="Yoshikawa Y."/>
            <person name="Matsunawa H."/>
            <person name="Ichihara T."/>
            <person name="Shiohata N."/>
            <person name="Sano S."/>
            <person name="Moriya S."/>
            <person name="Momiyama H."/>
            <person name="Satoh N."/>
            <person name="Takami S."/>
            <person name="Terashima Y."/>
            <person name="Suzuki O."/>
            <person name="Nakagawa S."/>
            <person name="Senoh A."/>
            <person name="Mizoguchi H."/>
            <person name="Goto Y."/>
            <person name="Shimizu F."/>
            <person name="Wakebe H."/>
            <person name="Hishigaki H."/>
            <person name="Watanabe T."/>
            <person name="Sugiyama A."/>
            <person name="Takemoto M."/>
            <person name="Kawakami B."/>
            <person name="Yamazaki M."/>
            <person name="Watanabe K."/>
            <person name="Kumagai A."/>
            <person name="Itakura S."/>
            <person name="Fukuzumi Y."/>
            <person name="Fujimori Y."/>
            <person name="Komiyama M."/>
            <person name="Tashiro H."/>
            <person name="Tanigami A."/>
            <person name="Fujiwara T."/>
            <person name="Ono T."/>
            <person name="Yamada K."/>
            <person name="Fujii Y."/>
            <person name="Ozaki K."/>
            <person name="Hirao M."/>
            <person name="Ohmori Y."/>
            <person name="Kawabata A."/>
            <person name="Hikiji T."/>
            <person name="Kobatake N."/>
            <person name="Inagaki H."/>
            <person name="Ikema Y."/>
            <person name="Okamoto S."/>
            <person name="Okitani R."/>
            <person name="Kawakami T."/>
            <person name="Noguchi S."/>
            <person name="Itoh T."/>
            <person name="Shigeta K."/>
            <person name="Senba T."/>
            <person name="Matsumura K."/>
            <person name="Nakajima Y."/>
            <person name="Mizuno T."/>
            <person name="Morinaga M."/>
            <person name="Sasaki M."/>
            <person name="Togashi T."/>
            <person name="Oyama M."/>
            <person name="Hata H."/>
            <person name="Watanabe M."/>
            <person name="Komatsu T."/>
            <person name="Mizushima-Sugano J."/>
            <person name="Satoh T."/>
            <person name="Shirai Y."/>
            <person name="Takahashi Y."/>
            <person name="Nakagawa K."/>
            <person name="Okumura K."/>
            <person name="Nagase T."/>
            <person name="Nomura N."/>
            <person name="Kikuchi H."/>
            <person name="Masuho Y."/>
            <person name="Yamashita R."/>
            <person name="Nakai K."/>
            <person name="Yada T."/>
            <person name="Nakamura Y."/>
            <person name="Ohara O."/>
            <person name="Isogai T."/>
            <person name="Sugano S."/>
        </authorList>
    </citation>
    <scope>NUCLEOTIDE SEQUENCE [LARGE SCALE MRNA] (ISOFORM 1)</scope>
    <source>
        <tissue>Placenta</tissue>
    </source>
</reference>
<reference key="2">
    <citation type="journal article" date="2004" name="Nature">
        <title>The DNA sequence and biology of human chromosome 19.</title>
        <authorList>
            <person name="Grimwood J."/>
            <person name="Gordon L.A."/>
            <person name="Olsen A.S."/>
            <person name="Terry A."/>
            <person name="Schmutz J."/>
            <person name="Lamerdin J.E."/>
            <person name="Hellsten U."/>
            <person name="Goodstein D."/>
            <person name="Couronne O."/>
            <person name="Tran-Gyamfi M."/>
            <person name="Aerts A."/>
            <person name="Altherr M."/>
            <person name="Ashworth L."/>
            <person name="Bajorek E."/>
            <person name="Black S."/>
            <person name="Branscomb E."/>
            <person name="Caenepeel S."/>
            <person name="Carrano A.V."/>
            <person name="Caoile C."/>
            <person name="Chan Y.M."/>
            <person name="Christensen M."/>
            <person name="Cleland C.A."/>
            <person name="Copeland A."/>
            <person name="Dalin E."/>
            <person name="Dehal P."/>
            <person name="Denys M."/>
            <person name="Detter J.C."/>
            <person name="Escobar J."/>
            <person name="Flowers D."/>
            <person name="Fotopulos D."/>
            <person name="Garcia C."/>
            <person name="Georgescu A.M."/>
            <person name="Glavina T."/>
            <person name="Gomez M."/>
            <person name="Gonzales E."/>
            <person name="Groza M."/>
            <person name="Hammon N."/>
            <person name="Hawkins T."/>
            <person name="Haydu L."/>
            <person name="Ho I."/>
            <person name="Huang W."/>
            <person name="Israni S."/>
            <person name="Jett J."/>
            <person name="Kadner K."/>
            <person name="Kimball H."/>
            <person name="Kobayashi A."/>
            <person name="Larionov V."/>
            <person name="Leem S.-H."/>
            <person name="Lopez F."/>
            <person name="Lou Y."/>
            <person name="Lowry S."/>
            <person name="Malfatti S."/>
            <person name="Martinez D."/>
            <person name="McCready P.M."/>
            <person name="Medina C."/>
            <person name="Morgan J."/>
            <person name="Nelson K."/>
            <person name="Nolan M."/>
            <person name="Ovcharenko I."/>
            <person name="Pitluck S."/>
            <person name="Pollard M."/>
            <person name="Popkie A.P."/>
            <person name="Predki P."/>
            <person name="Quan G."/>
            <person name="Ramirez L."/>
            <person name="Rash S."/>
            <person name="Retterer J."/>
            <person name="Rodriguez A."/>
            <person name="Rogers S."/>
            <person name="Salamov A."/>
            <person name="Salazar A."/>
            <person name="She X."/>
            <person name="Smith D."/>
            <person name="Slezak T."/>
            <person name="Solovyev V."/>
            <person name="Thayer N."/>
            <person name="Tice H."/>
            <person name="Tsai M."/>
            <person name="Ustaszewska A."/>
            <person name="Vo N."/>
            <person name="Wagner M."/>
            <person name="Wheeler J."/>
            <person name="Wu K."/>
            <person name="Xie G."/>
            <person name="Yang J."/>
            <person name="Dubchak I."/>
            <person name="Furey T.S."/>
            <person name="DeJong P."/>
            <person name="Dickson M."/>
            <person name="Gordon D."/>
            <person name="Eichler E.E."/>
            <person name="Pennacchio L.A."/>
            <person name="Richardson P."/>
            <person name="Stubbs L."/>
            <person name="Rokhsar D.S."/>
            <person name="Myers R.M."/>
            <person name="Rubin E.M."/>
            <person name="Lucas S.M."/>
        </authorList>
    </citation>
    <scope>NUCLEOTIDE SEQUENCE [LARGE SCALE GENOMIC DNA]</scope>
</reference>
<reference key="3">
    <citation type="journal article" date="2004" name="Genome Res.">
        <title>The status, quality, and expansion of the NIH full-length cDNA project: the Mammalian Gene Collection (MGC).</title>
        <authorList>
            <consortium name="The MGC Project Team"/>
        </authorList>
    </citation>
    <scope>NUCLEOTIDE SEQUENCE [LARGE SCALE MRNA] (ISOFORM 2)</scope>
    <scope>VARIANT PRO-296</scope>
    <source>
        <tissue>Liver</tissue>
    </source>
</reference>
<reference key="4">
    <citation type="journal article" date="1998" name="Genomics">
        <title>Analysis of homologous XRCC1-linked zinc-finger gene families in human and mouse: evidence for orthologous genes.</title>
        <authorList>
            <person name="Shannon M."/>
            <person name="Stubbs L."/>
        </authorList>
    </citation>
    <scope>NUCLEOTIDE SEQUENCE [MRNA] OF 1-506 (ISOFORM 1)</scope>
    <scope>NUCLEOTIDE SEQUENCE [MRNA] OF 637-738 (ISOFORMS 1/2)</scope>
</reference>
<reference key="5">
    <citation type="journal article" date="1995" name="DNA Cell Biol.">
        <title>Isolation of cDNA clones for 42 different Kruppel-related zinc finger proteins expressed in the human monoblast cell line U-937.</title>
        <authorList>
            <person name="Abrink M."/>
            <person name="Aveskogh M."/>
            <person name="Hellman L."/>
        </authorList>
    </citation>
    <scope>NUCLEOTIDE SEQUENCE [MRNA] OF 456-664 (ISOFORMS 1/2)</scope>
</reference>
<reference key="6">
    <citation type="submission" date="2000-10" db="EMBL/GenBank/DDBJ databases">
        <title>Sequence analysis of a 1Mb region in 19q13.2 containing a zinc finger gene cluster.</title>
        <authorList>
            <person name="Kodoyianni V."/>
            <person name="Ge Y."/>
            <person name="Krummel G.K."/>
            <person name="Kvikstad E."/>
            <person name="Grable L."/>
            <person name="Severin J."/>
            <person name="Gordon L."/>
            <person name="Shannon M."/>
            <person name="Brower A."/>
            <person name="Olsen A.S."/>
            <person name="Smith L.M."/>
        </authorList>
    </citation>
    <scope>NUCLEOTIDE SEQUENCE [GENOMIC DNA] OF 637-738 (ISOFORMS 1/2)</scope>
</reference>
<dbReference type="EMBL" id="AK300317">
    <property type="protein sequence ID" value="BAG62069.1"/>
    <property type="molecule type" value="mRNA"/>
</dbReference>
<dbReference type="EMBL" id="AC092477">
    <property type="status" value="NOT_ANNOTATED_CDS"/>
    <property type="molecule type" value="Genomic_DNA"/>
</dbReference>
<dbReference type="EMBL" id="AC138473">
    <property type="status" value="NOT_ANNOTATED_CDS"/>
    <property type="molecule type" value="Genomic_DNA"/>
</dbReference>
<dbReference type="EMBL" id="BC117215">
    <property type="protein sequence ID" value="AAI17216.1"/>
    <property type="molecule type" value="mRNA"/>
</dbReference>
<dbReference type="EMBL" id="AF027513">
    <property type="protein sequence ID" value="AAD12728.1"/>
    <property type="molecule type" value="mRNA"/>
</dbReference>
<dbReference type="EMBL" id="AF027514">
    <property type="protein sequence ID" value="AAD12729.1"/>
    <property type="molecule type" value="mRNA"/>
</dbReference>
<dbReference type="EMBL" id="X78929">
    <property type="protein sequence ID" value="CAA55529.1"/>
    <property type="molecule type" value="mRNA"/>
</dbReference>
<dbReference type="EMBL" id="AC084239">
    <property type="protein sequence ID" value="AAG23969.1"/>
    <property type="molecule type" value="Genomic_DNA"/>
</dbReference>
<dbReference type="CCDS" id="CCDS33048.1">
    <molecule id="Q14590-1"/>
</dbReference>
<dbReference type="CCDS" id="CCDS92638.1">
    <molecule id="Q14590-2"/>
</dbReference>
<dbReference type="PIR" id="S47068">
    <property type="entry name" value="S47068"/>
</dbReference>
<dbReference type="RefSeq" id="NP_001398000.1">
    <molecule id="Q14590-2"/>
    <property type="nucleotide sequence ID" value="NM_001411071.1"/>
</dbReference>
<dbReference type="RefSeq" id="NP_004225.3">
    <molecule id="Q14590-1"/>
    <property type="nucleotide sequence ID" value="NM_004234.4"/>
</dbReference>
<dbReference type="RefSeq" id="XP_005259469.1">
    <property type="nucleotide sequence ID" value="XM_005259412.4"/>
</dbReference>
<dbReference type="SMR" id="Q14590"/>
<dbReference type="BioGRID" id="114722">
    <property type="interactions" value="13"/>
</dbReference>
<dbReference type="FunCoup" id="Q14590">
    <property type="interactions" value="33"/>
</dbReference>
<dbReference type="IntAct" id="Q14590">
    <property type="interactions" value="12"/>
</dbReference>
<dbReference type="MINT" id="Q14590"/>
<dbReference type="STRING" id="9606.ENSP00000291182"/>
<dbReference type="GlyGen" id="Q14590">
    <property type="glycosylation" value="1 site, 1 O-linked glycan (1 site)"/>
</dbReference>
<dbReference type="iPTMnet" id="Q14590"/>
<dbReference type="PhosphoSitePlus" id="Q14590"/>
<dbReference type="BioMuta" id="ZNF235"/>
<dbReference type="DMDM" id="215274192"/>
<dbReference type="jPOST" id="Q14590"/>
<dbReference type="MassIVE" id="Q14590"/>
<dbReference type="PaxDb" id="9606-ENSP00000291182"/>
<dbReference type="PeptideAtlas" id="Q14590"/>
<dbReference type="ProteomicsDB" id="60063">
    <molecule id="Q14590-1"/>
</dbReference>
<dbReference type="ProteomicsDB" id="60064">
    <molecule id="Q14590-2"/>
</dbReference>
<dbReference type="Antibodypedia" id="49043">
    <property type="antibodies" value="20 antibodies from 11 providers"/>
</dbReference>
<dbReference type="DNASU" id="9310"/>
<dbReference type="Ensembl" id="ENST00000291182.9">
    <molecule id="Q14590-1"/>
    <property type="protein sequence ID" value="ENSP00000291182.3"/>
    <property type="gene ID" value="ENSG00000159917.17"/>
</dbReference>
<dbReference type="Ensembl" id="ENST00000650576.1">
    <molecule id="Q14590-2"/>
    <property type="protein sequence ID" value="ENSP00000497018.1"/>
    <property type="gene ID" value="ENSG00000159917.17"/>
</dbReference>
<dbReference type="GeneID" id="9310"/>
<dbReference type="KEGG" id="hsa:9310"/>
<dbReference type="MANE-Select" id="ENST00000291182.9">
    <property type="protein sequence ID" value="ENSP00000291182.3"/>
    <property type="RefSeq nucleotide sequence ID" value="NM_004234.4"/>
    <property type="RefSeq protein sequence ID" value="NP_004225.3"/>
</dbReference>
<dbReference type="UCSC" id="uc002oza.5">
    <molecule id="Q14590-1"/>
    <property type="organism name" value="human"/>
</dbReference>
<dbReference type="AGR" id="HGNC:12866"/>
<dbReference type="CTD" id="9310"/>
<dbReference type="DisGeNET" id="9310"/>
<dbReference type="GeneCards" id="ZNF235"/>
<dbReference type="HGNC" id="HGNC:12866">
    <property type="gene designation" value="ZNF235"/>
</dbReference>
<dbReference type="HPA" id="ENSG00000159917">
    <property type="expression patterns" value="Low tissue specificity"/>
</dbReference>
<dbReference type="MIM" id="604749">
    <property type="type" value="gene"/>
</dbReference>
<dbReference type="neXtProt" id="NX_Q14590"/>
<dbReference type="OpenTargets" id="ENSG00000159917"/>
<dbReference type="PharmGKB" id="PA37455"/>
<dbReference type="VEuPathDB" id="HostDB:ENSG00000159917"/>
<dbReference type="eggNOG" id="KOG1721">
    <property type="taxonomic scope" value="Eukaryota"/>
</dbReference>
<dbReference type="GeneTree" id="ENSGT00940000162402"/>
<dbReference type="HOGENOM" id="CLU_002678_44_5_1"/>
<dbReference type="InParanoid" id="Q14590"/>
<dbReference type="OMA" id="FAPYVNI"/>
<dbReference type="OrthoDB" id="9411774at2759"/>
<dbReference type="PAN-GO" id="Q14590">
    <property type="GO annotations" value="4 GO annotations based on evolutionary models"/>
</dbReference>
<dbReference type="PhylomeDB" id="Q14590"/>
<dbReference type="TreeFam" id="TF350845"/>
<dbReference type="PathwayCommons" id="Q14590"/>
<dbReference type="Reactome" id="R-HSA-212436">
    <property type="pathway name" value="Generic Transcription Pathway"/>
</dbReference>
<dbReference type="SignaLink" id="Q14590"/>
<dbReference type="BioGRID-ORCS" id="9310">
    <property type="hits" value="5 hits in 1168 CRISPR screens"/>
</dbReference>
<dbReference type="ChiTaRS" id="ZNF235">
    <property type="organism name" value="human"/>
</dbReference>
<dbReference type="GenomeRNAi" id="9310"/>
<dbReference type="Pharos" id="Q14590">
    <property type="development level" value="Tdark"/>
</dbReference>
<dbReference type="PRO" id="PR:Q14590"/>
<dbReference type="Proteomes" id="UP000005640">
    <property type="component" value="Chromosome 19"/>
</dbReference>
<dbReference type="RNAct" id="Q14590">
    <property type="molecule type" value="protein"/>
</dbReference>
<dbReference type="Bgee" id="ENSG00000159917">
    <property type="expression patterns" value="Expressed in primordial germ cell in gonad and 105 other cell types or tissues"/>
</dbReference>
<dbReference type="ExpressionAtlas" id="Q14590">
    <property type="expression patterns" value="baseline and differential"/>
</dbReference>
<dbReference type="GO" id="GO:0005634">
    <property type="term" value="C:nucleus"/>
    <property type="evidence" value="ECO:0007669"/>
    <property type="project" value="UniProtKB-SubCell"/>
</dbReference>
<dbReference type="GO" id="GO:0003677">
    <property type="term" value="F:DNA binding"/>
    <property type="evidence" value="ECO:0007669"/>
    <property type="project" value="UniProtKB-KW"/>
</dbReference>
<dbReference type="GO" id="GO:0003700">
    <property type="term" value="F:DNA-binding transcription factor activity"/>
    <property type="evidence" value="ECO:0000303"/>
    <property type="project" value="ARUK-UCL"/>
</dbReference>
<dbReference type="GO" id="GO:0008270">
    <property type="term" value="F:zinc ion binding"/>
    <property type="evidence" value="ECO:0007669"/>
    <property type="project" value="UniProtKB-KW"/>
</dbReference>
<dbReference type="CDD" id="cd07765">
    <property type="entry name" value="KRAB_A-box"/>
    <property type="match status" value="1"/>
</dbReference>
<dbReference type="FunFam" id="3.30.160.60:FF:000726">
    <property type="entry name" value="Zinc finger protein 214"/>
    <property type="match status" value="1"/>
</dbReference>
<dbReference type="FunFam" id="3.30.160.60:FF:002239">
    <property type="entry name" value="Zinc finger protein 226"/>
    <property type="match status" value="1"/>
</dbReference>
<dbReference type="FunFam" id="3.30.160.60:FF:003579">
    <property type="entry name" value="Zinc finger protein 235"/>
    <property type="match status" value="1"/>
</dbReference>
<dbReference type="FunFam" id="3.30.160.60:FF:000874">
    <property type="entry name" value="zinc finger protein 235 isoform X1"/>
    <property type="match status" value="3"/>
</dbReference>
<dbReference type="FunFam" id="3.30.160.60:FF:000913">
    <property type="entry name" value="zinc finger protein 235 isoform X1"/>
    <property type="match status" value="1"/>
</dbReference>
<dbReference type="FunFam" id="3.30.160.60:FF:001049">
    <property type="entry name" value="zinc finger protein 319"/>
    <property type="match status" value="1"/>
</dbReference>
<dbReference type="FunFam" id="3.30.160.60:FF:002343">
    <property type="entry name" value="Zinc finger protein 33A"/>
    <property type="match status" value="2"/>
</dbReference>
<dbReference type="FunFam" id="3.30.160.60:FF:000023">
    <property type="entry name" value="zinc finger protein 37 homolog"/>
    <property type="match status" value="1"/>
</dbReference>
<dbReference type="FunFam" id="3.30.160.60:FF:000663">
    <property type="entry name" value="Zinc finger protein 45"/>
    <property type="match status" value="1"/>
</dbReference>
<dbReference type="FunFam" id="3.30.160.60:FF:002090">
    <property type="entry name" value="Zinc finger protein 473"/>
    <property type="match status" value="1"/>
</dbReference>
<dbReference type="FunFam" id="3.30.160.60:FF:001700">
    <property type="entry name" value="Zinc finger protein 677"/>
    <property type="match status" value="1"/>
</dbReference>
<dbReference type="FunFam" id="3.30.160.60:FF:002357">
    <property type="entry name" value="Zinc finger protein 782"/>
    <property type="match status" value="2"/>
</dbReference>
<dbReference type="Gene3D" id="6.10.140.140">
    <property type="match status" value="1"/>
</dbReference>
<dbReference type="Gene3D" id="3.30.160.60">
    <property type="entry name" value="Classic Zinc Finger"/>
    <property type="match status" value="16"/>
</dbReference>
<dbReference type="InterPro" id="IPR050589">
    <property type="entry name" value="Ikaros_C2H2-ZF"/>
</dbReference>
<dbReference type="InterPro" id="IPR001909">
    <property type="entry name" value="KRAB"/>
</dbReference>
<dbReference type="InterPro" id="IPR036051">
    <property type="entry name" value="KRAB_dom_sf"/>
</dbReference>
<dbReference type="InterPro" id="IPR036236">
    <property type="entry name" value="Znf_C2H2_sf"/>
</dbReference>
<dbReference type="InterPro" id="IPR013087">
    <property type="entry name" value="Znf_C2H2_type"/>
</dbReference>
<dbReference type="PANTHER" id="PTHR24404:SF107">
    <property type="entry name" value="ZFP2 ZINC FINGER PROTEIN"/>
    <property type="match status" value="1"/>
</dbReference>
<dbReference type="PANTHER" id="PTHR24404">
    <property type="entry name" value="ZINC FINGER PROTEIN"/>
    <property type="match status" value="1"/>
</dbReference>
<dbReference type="Pfam" id="PF01352">
    <property type="entry name" value="KRAB"/>
    <property type="match status" value="1"/>
</dbReference>
<dbReference type="Pfam" id="PF00096">
    <property type="entry name" value="zf-C2H2"/>
    <property type="match status" value="14"/>
</dbReference>
<dbReference type="SMART" id="SM00349">
    <property type="entry name" value="KRAB"/>
    <property type="match status" value="1"/>
</dbReference>
<dbReference type="SMART" id="SM00355">
    <property type="entry name" value="ZnF_C2H2"/>
    <property type="match status" value="16"/>
</dbReference>
<dbReference type="SUPFAM" id="SSF57667">
    <property type="entry name" value="beta-beta-alpha zinc fingers"/>
    <property type="match status" value="9"/>
</dbReference>
<dbReference type="SUPFAM" id="SSF109640">
    <property type="entry name" value="KRAB domain (Kruppel-associated box)"/>
    <property type="match status" value="1"/>
</dbReference>
<dbReference type="PROSITE" id="PS50805">
    <property type="entry name" value="KRAB"/>
    <property type="match status" value="1"/>
</dbReference>
<dbReference type="PROSITE" id="PS00028">
    <property type="entry name" value="ZINC_FINGER_C2H2_1"/>
    <property type="match status" value="15"/>
</dbReference>
<dbReference type="PROSITE" id="PS50157">
    <property type="entry name" value="ZINC_FINGER_C2H2_2"/>
    <property type="match status" value="16"/>
</dbReference>
<accession>Q14590</accession>
<accession>B4DTQ7</accession>
<accession>O14898</accession>
<accession>O14899</accession>
<accession>Q17RR8</accession>
<evidence type="ECO:0000255" key="1">
    <source>
        <dbReference type="PROSITE-ProRule" id="PRU00042"/>
    </source>
</evidence>
<evidence type="ECO:0000255" key="2">
    <source>
        <dbReference type="PROSITE-ProRule" id="PRU00119"/>
    </source>
</evidence>
<evidence type="ECO:0000269" key="3">
    <source>
    </source>
</evidence>
<evidence type="ECO:0000303" key="4">
    <source>
    </source>
</evidence>
<evidence type="ECO:0000305" key="5"/>
<proteinExistence type="evidence at protein level"/>
<gene>
    <name type="primary">ZNF235</name>
    <name type="synonym">ZFP93</name>
    <name type="synonym">ZNF270</name>
</gene>
<keyword id="KW-0025">Alternative splicing</keyword>
<keyword id="KW-0238">DNA-binding</keyword>
<keyword id="KW-0479">Metal-binding</keyword>
<keyword id="KW-0539">Nucleus</keyword>
<keyword id="KW-1267">Proteomics identification</keyword>
<keyword id="KW-1185">Reference proteome</keyword>
<keyword id="KW-0677">Repeat</keyword>
<keyword id="KW-0804">Transcription</keyword>
<keyword id="KW-0805">Transcription regulation</keyword>
<keyword id="KW-0862">Zinc</keyword>
<keyword id="KW-0863">Zinc-finger</keyword>
<feature type="chain" id="PRO_0000047474" description="Zinc finger protein 235">
    <location>
        <begin position="1"/>
        <end position="738"/>
    </location>
</feature>
<feature type="domain" description="KRAB" evidence="2">
    <location>
        <begin position="8"/>
        <end position="79"/>
    </location>
</feature>
<feature type="zinc finger region" description="C2H2-type 1; degenerate" evidence="1">
    <location>
        <begin position="263"/>
        <end position="285"/>
    </location>
</feature>
<feature type="zinc finger region" description="C2H2-type 2" evidence="1">
    <location>
        <begin position="319"/>
        <end position="341"/>
    </location>
</feature>
<feature type="zinc finger region" description="C2H2-type 3" evidence="1">
    <location>
        <begin position="347"/>
        <end position="369"/>
    </location>
</feature>
<feature type="zinc finger region" description="C2H2-type 4" evidence="1">
    <location>
        <begin position="375"/>
        <end position="397"/>
    </location>
</feature>
<feature type="zinc finger region" description="C2H2-type 5" evidence="1">
    <location>
        <begin position="403"/>
        <end position="425"/>
    </location>
</feature>
<feature type="zinc finger region" description="C2H2-type 6" evidence="1">
    <location>
        <begin position="431"/>
        <end position="453"/>
    </location>
</feature>
<feature type="zinc finger region" description="C2H2-type 7" evidence="1">
    <location>
        <begin position="459"/>
        <end position="481"/>
    </location>
</feature>
<feature type="zinc finger region" description="C2H2-type 8" evidence="1">
    <location>
        <begin position="487"/>
        <end position="509"/>
    </location>
</feature>
<feature type="zinc finger region" description="C2H2-type 9" evidence="1">
    <location>
        <begin position="515"/>
        <end position="537"/>
    </location>
</feature>
<feature type="zinc finger region" description="C2H2-type 10" evidence="1">
    <location>
        <begin position="543"/>
        <end position="565"/>
    </location>
</feature>
<feature type="zinc finger region" description="C2H2-type 11" evidence="1">
    <location>
        <begin position="571"/>
        <end position="593"/>
    </location>
</feature>
<feature type="zinc finger region" description="C2H2-type 12" evidence="1">
    <location>
        <begin position="599"/>
        <end position="621"/>
    </location>
</feature>
<feature type="zinc finger region" description="C2H2-type 13" evidence="1">
    <location>
        <begin position="627"/>
        <end position="649"/>
    </location>
</feature>
<feature type="zinc finger region" description="C2H2-type 14" evidence="1">
    <location>
        <begin position="655"/>
        <end position="677"/>
    </location>
</feature>
<feature type="zinc finger region" description="C2H2-type 15" evidence="1">
    <location>
        <begin position="683"/>
        <end position="705"/>
    </location>
</feature>
<feature type="zinc finger region" description="C2H2-type 16" evidence="1">
    <location>
        <begin position="711"/>
        <end position="733"/>
    </location>
</feature>
<feature type="splice variant" id="VSP_022166" description="In isoform 2." evidence="4">
    <location>
        <begin position="77"/>
        <end position="80"/>
    </location>
</feature>
<feature type="sequence variant" id="VAR_029806" description="In dbSNP:rs2125579." evidence="3">
    <original>H</original>
    <variation>P</variation>
    <location>
        <position position="296"/>
    </location>
</feature>
<feature type="sequence conflict" description="In Ref. 4; AAD12728." evidence="5" ref="4">
    <original>M</original>
    <variation>T</variation>
    <location>
        <position position="123"/>
    </location>
</feature>
<feature type="sequence conflict" description="In Ref. 5; CAA55529." evidence="5" ref="5">
    <original>A</original>
    <variation>P</variation>
    <location>
        <position position="635"/>
    </location>
</feature>
<organism>
    <name type="scientific">Homo sapiens</name>
    <name type="common">Human</name>
    <dbReference type="NCBI Taxonomy" id="9606"/>
    <lineage>
        <taxon>Eukaryota</taxon>
        <taxon>Metazoa</taxon>
        <taxon>Chordata</taxon>
        <taxon>Craniata</taxon>
        <taxon>Vertebrata</taxon>
        <taxon>Euteleostomi</taxon>
        <taxon>Mammalia</taxon>
        <taxon>Eutheria</taxon>
        <taxon>Euarchontoglires</taxon>
        <taxon>Primates</taxon>
        <taxon>Haplorrhini</taxon>
        <taxon>Catarrhini</taxon>
        <taxon>Hominidae</taxon>
        <taxon>Homo</taxon>
    </lineage>
</organism>
<comment type="function">
    <text>May be involved in transcriptional regulation.</text>
</comment>
<comment type="subcellular location">
    <subcellularLocation>
        <location evidence="5">Nucleus</location>
    </subcellularLocation>
</comment>
<comment type="alternative products">
    <event type="alternative splicing"/>
    <isoform>
        <id>Q14590-1</id>
        <name>1</name>
        <sequence type="displayed"/>
    </isoform>
    <isoform>
        <id>Q14590-2</id>
        <name>2</name>
        <sequence type="described" ref="VSP_022166"/>
    </isoform>
</comment>
<comment type="similarity">
    <text evidence="5">Belongs to the krueppel C2H2-type zinc-finger protein family.</text>
</comment>
<protein>
    <recommendedName>
        <fullName>Zinc finger protein 235</fullName>
    </recommendedName>
    <alternativeName>
        <fullName>Zinc finger protein 270</fullName>
    </alternativeName>
    <alternativeName>
        <fullName>Zinc finger protein 93 homolog</fullName>
        <shortName>Zfp-93</shortName>
    </alternativeName>
    <alternativeName>
        <fullName>Zinc finger protein HZF6</fullName>
    </alternativeName>
</protein>
<name>ZN235_HUMAN</name>
<sequence length="738" mass="83977">MTKFQEAVTFKDVAVAFTEEELGLLDSAQRKLYRDVMLENFRNLVSVGHQSFKPDMISQLEREEKLWMKELQTQRGKHSGDRNQNEMATLHKAGLRCFSLGELSCWQIKRHIASKLARSQDSMINIEGKSSQFPKHHDSPCQVGAGESIQASVDDNCLVNHIGDHSSIIENQEFPTGKVPNSWSKIYLNETQNYQRSCKQTQMKNKLCIFAPYVDIFSCISHHHDDNIVHKRDKVHSNSDCGKDTLKVSPLTQRSIHTGQKTYQGNECEEAFNDSSSLELHKQVHLGKKSPACSTHEKDTSYSSGIPVQQSVRTGKKRYWCHECGKGFSQSSNLQTHQRVHTGEKPYTCHECGKSFNQSSHLYAHLPIHTGEKPYRCDSCGKGFSRSTDLNIHCRVHTGEKPYKCEVCGKGFTQRSHLQAHERIHTGEKPYKCGDCGKRFSCSSNLHTHQRVHTEEKPYKCDECGKCFSLSFNLHSHQRVHTGEKPYKCEECGKGFSSASSFQSHQRVHTGEKPFRCNVCGKGFSQSSYFQAHQRVHTGEKPYKCEVCGKRFNWSLNLHNHQRVHTGEKPYKCEECGKGFSQASNLQAHQSVHTGEKPFKCDACQKRFSQASHLQAHQRVHTGEKPYKCDTCGKAFSQRSNLQVHQIIHTGEKPFKCEECGKEFSWSAGLSAHQRVHTGEKPYTCQQCGKGFSQASHFHTHQRVHTGERPYICDVCCKGFSQRSHLIYHQRVHTGGNL</sequence>